<comment type="function">
    <text evidence="1">Exhibits a very high intrinsic GTPase hydrolysis rate. Involved in the addition of a carboxymethylaminomethyl (cmnm) group at the wobble position (U34) of certain tRNAs, forming tRNA-cmnm(5)s(2)U34.</text>
</comment>
<comment type="cofactor">
    <cofactor evidence="1">
        <name>K(+)</name>
        <dbReference type="ChEBI" id="CHEBI:29103"/>
    </cofactor>
    <text evidence="1">Binds 1 potassium ion per subunit.</text>
</comment>
<comment type="subunit">
    <text evidence="1">Homodimer. Heterotetramer of two MnmE and two MnmG subunits.</text>
</comment>
<comment type="subcellular location">
    <subcellularLocation>
        <location evidence="1">Cytoplasm</location>
    </subcellularLocation>
</comment>
<comment type="similarity">
    <text evidence="1">Belongs to the TRAFAC class TrmE-Era-EngA-EngB-Septin-like GTPase superfamily. TrmE GTPase family.</text>
</comment>
<evidence type="ECO:0000255" key="1">
    <source>
        <dbReference type="HAMAP-Rule" id="MF_00379"/>
    </source>
</evidence>
<protein>
    <recommendedName>
        <fullName evidence="1">tRNA modification GTPase MnmE</fullName>
        <ecNumber evidence="1">3.6.-.-</ecNumber>
    </recommendedName>
</protein>
<gene>
    <name evidence="1" type="primary">mnmE</name>
    <name evidence="1" type="synonym">trmE</name>
    <name type="ordered locus">Noc_3086</name>
</gene>
<accession>Q3J6L9</accession>
<keyword id="KW-0963">Cytoplasm</keyword>
<keyword id="KW-0342">GTP-binding</keyword>
<keyword id="KW-0378">Hydrolase</keyword>
<keyword id="KW-0460">Magnesium</keyword>
<keyword id="KW-0479">Metal-binding</keyword>
<keyword id="KW-0547">Nucleotide-binding</keyword>
<keyword id="KW-0630">Potassium</keyword>
<keyword id="KW-1185">Reference proteome</keyword>
<keyword id="KW-0819">tRNA processing</keyword>
<organism>
    <name type="scientific">Nitrosococcus oceani (strain ATCC 19707 / BCRC 17464 / JCM 30415 / NCIMB 11848 / C-107)</name>
    <dbReference type="NCBI Taxonomy" id="323261"/>
    <lineage>
        <taxon>Bacteria</taxon>
        <taxon>Pseudomonadati</taxon>
        <taxon>Pseudomonadota</taxon>
        <taxon>Gammaproteobacteria</taxon>
        <taxon>Chromatiales</taxon>
        <taxon>Chromatiaceae</taxon>
        <taxon>Nitrosococcus</taxon>
    </lineage>
</organism>
<feature type="chain" id="PRO_0000345854" description="tRNA modification GTPase MnmE">
    <location>
        <begin position="1"/>
        <end position="458"/>
    </location>
</feature>
<feature type="domain" description="TrmE-type G">
    <location>
        <begin position="224"/>
        <end position="381"/>
    </location>
</feature>
<feature type="binding site" evidence="1">
    <location>
        <position position="32"/>
    </location>
    <ligand>
        <name>(6S)-5-formyl-5,6,7,8-tetrahydrofolate</name>
        <dbReference type="ChEBI" id="CHEBI:57457"/>
    </ligand>
</feature>
<feature type="binding site" evidence="1">
    <location>
        <position position="89"/>
    </location>
    <ligand>
        <name>(6S)-5-formyl-5,6,7,8-tetrahydrofolate</name>
        <dbReference type="ChEBI" id="CHEBI:57457"/>
    </ligand>
</feature>
<feature type="binding site" evidence="1">
    <location>
        <position position="128"/>
    </location>
    <ligand>
        <name>(6S)-5-formyl-5,6,7,8-tetrahydrofolate</name>
        <dbReference type="ChEBI" id="CHEBI:57457"/>
    </ligand>
</feature>
<feature type="binding site" evidence="1">
    <location>
        <begin position="234"/>
        <end position="239"/>
    </location>
    <ligand>
        <name>GTP</name>
        <dbReference type="ChEBI" id="CHEBI:37565"/>
    </ligand>
</feature>
<feature type="binding site" evidence="1">
    <location>
        <position position="234"/>
    </location>
    <ligand>
        <name>K(+)</name>
        <dbReference type="ChEBI" id="CHEBI:29103"/>
    </ligand>
</feature>
<feature type="binding site" evidence="1">
    <location>
        <position position="238"/>
    </location>
    <ligand>
        <name>Mg(2+)</name>
        <dbReference type="ChEBI" id="CHEBI:18420"/>
    </ligand>
</feature>
<feature type="binding site" evidence="1">
    <location>
        <begin position="253"/>
        <end position="259"/>
    </location>
    <ligand>
        <name>GTP</name>
        <dbReference type="ChEBI" id="CHEBI:37565"/>
    </ligand>
</feature>
<feature type="binding site" evidence="1">
    <location>
        <position position="253"/>
    </location>
    <ligand>
        <name>K(+)</name>
        <dbReference type="ChEBI" id="CHEBI:29103"/>
    </ligand>
</feature>
<feature type="binding site" evidence="1">
    <location>
        <position position="255"/>
    </location>
    <ligand>
        <name>K(+)</name>
        <dbReference type="ChEBI" id="CHEBI:29103"/>
    </ligand>
</feature>
<feature type="binding site" evidence="1">
    <location>
        <position position="258"/>
    </location>
    <ligand>
        <name>K(+)</name>
        <dbReference type="ChEBI" id="CHEBI:29103"/>
    </ligand>
</feature>
<feature type="binding site" evidence="1">
    <location>
        <position position="259"/>
    </location>
    <ligand>
        <name>Mg(2+)</name>
        <dbReference type="ChEBI" id="CHEBI:18420"/>
    </ligand>
</feature>
<feature type="binding site" evidence="1">
    <location>
        <begin position="278"/>
        <end position="281"/>
    </location>
    <ligand>
        <name>GTP</name>
        <dbReference type="ChEBI" id="CHEBI:37565"/>
    </ligand>
</feature>
<feature type="binding site" evidence="1">
    <location>
        <position position="458"/>
    </location>
    <ligand>
        <name>(6S)-5-formyl-5,6,7,8-tetrahydrofolate</name>
        <dbReference type="ChEBI" id="CHEBI:57457"/>
    </ligand>
</feature>
<dbReference type="EC" id="3.6.-.-" evidence="1"/>
<dbReference type="EMBL" id="CP000127">
    <property type="protein sequence ID" value="ABA59527.1"/>
    <property type="molecule type" value="Genomic_DNA"/>
</dbReference>
<dbReference type="RefSeq" id="WP_011331145.1">
    <property type="nucleotide sequence ID" value="NC_007484.1"/>
</dbReference>
<dbReference type="SMR" id="Q3J6L9"/>
<dbReference type="FunCoup" id="Q3J6L9">
    <property type="interactions" value="568"/>
</dbReference>
<dbReference type="STRING" id="323261.Noc_3086"/>
<dbReference type="KEGG" id="noc:Noc_3086"/>
<dbReference type="eggNOG" id="COG0486">
    <property type="taxonomic scope" value="Bacteria"/>
</dbReference>
<dbReference type="HOGENOM" id="CLU_019624_4_1_6"/>
<dbReference type="InParanoid" id="Q3J6L9"/>
<dbReference type="Proteomes" id="UP000006838">
    <property type="component" value="Chromosome"/>
</dbReference>
<dbReference type="GO" id="GO:0005829">
    <property type="term" value="C:cytosol"/>
    <property type="evidence" value="ECO:0007669"/>
    <property type="project" value="TreeGrafter"/>
</dbReference>
<dbReference type="GO" id="GO:0005525">
    <property type="term" value="F:GTP binding"/>
    <property type="evidence" value="ECO:0007669"/>
    <property type="project" value="UniProtKB-UniRule"/>
</dbReference>
<dbReference type="GO" id="GO:0003924">
    <property type="term" value="F:GTPase activity"/>
    <property type="evidence" value="ECO:0007669"/>
    <property type="project" value="UniProtKB-UniRule"/>
</dbReference>
<dbReference type="GO" id="GO:0046872">
    <property type="term" value="F:metal ion binding"/>
    <property type="evidence" value="ECO:0007669"/>
    <property type="project" value="UniProtKB-KW"/>
</dbReference>
<dbReference type="GO" id="GO:0030488">
    <property type="term" value="P:tRNA methylation"/>
    <property type="evidence" value="ECO:0007669"/>
    <property type="project" value="TreeGrafter"/>
</dbReference>
<dbReference type="GO" id="GO:0002098">
    <property type="term" value="P:tRNA wobble uridine modification"/>
    <property type="evidence" value="ECO:0007669"/>
    <property type="project" value="TreeGrafter"/>
</dbReference>
<dbReference type="CDD" id="cd04164">
    <property type="entry name" value="trmE"/>
    <property type="match status" value="1"/>
</dbReference>
<dbReference type="CDD" id="cd14858">
    <property type="entry name" value="TrmE_N"/>
    <property type="match status" value="1"/>
</dbReference>
<dbReference type="FunFam" id="3.30.1360.120:FF:000001">
    <property type="entry name" value="tRNA modification GTPase MnmE"/>
    <property type="match status" value="1"/>
</dbReference>
<dbReference type="Gene3D" id="3.40.50.300">
    <property type="entry name" value="P-loop containing nucleotide triphosphate hydrolases"/>
    <property type="match status" value="1"/>
</dbReference>
<dbReference type="Gene3D" id="3.30.1360.120">
    <property type="entry name" value="Probable tRNA modification gtpase trme, domain 1"/>
    <property type="match status" value="1"/>
</dbReference>
<dbReference type="Gene3D" id="1.20.120.430">
    <property type="entry name" value="tRNA modification GTPase MnmE domain 2"/>
    <property type="match status" value="1"/>
</dbReference>
<dbReference type="HAMAP" id="MF_00379">
    <property type="entry name" value="GTPase_MnmE"/>
    <property type="match status" value="1"/>
</dbReference>
<dbReference type="InterPro" id="IPR031168">
    <property type="entry name" value="G_TrmE"/>
</dbReference>
<dbReference type="InterPro" id="IPR006073">
    <property type="entry name" value="GTP-bd"/>
</dbReference>
<dbReference type="InterPro" id="IPR018948">
    <property type="entry name" value="GTP-bd_TrmE_N"/>
</dbReference>
<dbReference type="InterPro" id="IPR004520">
    <property type="entry name" value="GTPase_MnmE"/>
</dbReference>
<dbReference type="InterPro" id="IPR027368">
    <property type="entry name" value="MnmE_dom2"/>
</dbReference>
<dbReference type="InterPro" id="IPR025867">
    <property type="entry name" value="MnmE_helical"/>
</dbReference>
<dbReference type="InterPro" id="IPR027417">
    <property type="entry name" value="P-loop_NTPase"/>
</dbReference>
<dbReference type="InterPro" id="IPR005225">
    <property type="entry name" value="Small_GTP-bd"/>
</dbReference>
<dbReference type="InterPro" id="IPR027266">
    <property type="entry name" value="TrmE/GcvT_dom1"/>
</dbReference>
<dbReference type="NCBIfam" id="TIGR00450">
    <property type="entry name" value="mnmE_trmE_thdF"/>
    <property type="match status" value="1"/>
</dbReference>
<dbReference type="NCBIfam" id="NF003661">
    <property type="entry name" value="PRK05291.1-3"/>
    <property type="match status" value="1"/>
</dbReference>
<dbReference type="NCBIfam" id="TIGR00231">
    <property type="entry name" value="small_GTP"/>
    <property type="match status" value="1"/>
</dbReference>
<dbReference type="PANTHER" id="PTHR42714">
    <property type="entry name" value="TRNA MODIFICATION GTPASE GTPBP3"/>
    <property type="match status" value="1"/>
</dbReference>
<dbReference type="PANTHER" id="PTHR42714:SF2">
    <property type="entry name" value="TRNA MODIFICATION GTPASE GTPBP3, MITOCHONDRIAL"/>
    <property type="match status" value="1"/>
</dbReference>
<dbReference type="Pfam" id="PF01926">
    <property type="entry name" value="MMR_HSR1"/>
    <property type="match status" value="1"/>
</dbReference>
<dbReference type="Pfam" id="PF12631">
    <property type="entry name" value="MnmE_helical"/>
    <property type="match status" value="1"/>
</dbReference>
<dbReference type="Pfam" id="PF10396">
    <property type="entry name" value="TrmE_N"/>
    <property type="match status" value="1"/>
</dbReference>
<dbReference type="SUPFAM" id="SSF52540">
    <property type="entry name" value="P-loop containing nucleoside triphosphate hydrolases"/>
    <property type="match status" value="1"/>
</dbReference>
<dbReference type="SUPFAM" id="SSF116878">
    <property type="entry name" value="TrmE connector domain"/>
    <property type="match status" value="1"/>
</dbReference>
<dbReference type="PROSITE" id="PS51709">
    <property type="entry name" value="G_TRME"/>
    <property type="match status" value="1"/>
</dbReference>
<reference key="1">
    <citation type="journal article" date="2006" name="Appl. Environ. Microbiol.">
        <title>Complete genome sequence of the marine, chemolithoautotrophic, ammonia-oxidizing bacterium Nitrosococcus oceani ATCC 19707.</title>
        <authorList>
            <person name="Klotz M.G."/>
            <person name="Arp D.J."/>
            <person name="Chain P.S.G."/>
            <person name="El-Sheikh A.F."/>
            <person name="Hauser L.J."/>
            <person name="Hommes N.G."/>
            <person name="Larimer F.W."/>
            <person name="Malfatti S.A."/>
            <person name="Norton J.M."/>
            <person name="Poret-Peterson A.T."/>
            <person name="Vergez L.M."/>
            <person name="Ward B.B."/>
        </authorList>
    </citation>
    <scope>NUCLEOTIDE SEQUENCE [LARGE SCALE GENOMIC DNA]</scope>
    <source>
        <strain>ATCC 19707 / BCRC 17464 / JCM 30415 / NCIMB 11848 / C-107</strain>
    </source>
</reference>
<proteinExistence type="inferred from homology"/>
<sequence>MVHYPSDRTRRLSDTIAAIATPPGQGSVGIVRVSGPFCRQIAEQVTGRVPPPRYATFCHFRNRYGEILDQGLILYFPGPHSFTGEDVLELQGHGGPAIMDWLLSSVLQLGVRLARPGEFSERAFLNNKIDLAQAEAIADLIESASEQAARSALRSLHGEFSAQIQTLREQLTELRCVVEANIDFSDEDIDFIERGMVAERLKEIQSTLQSIHRSARQGALLREGVRVVLAGRPNVGKSSLHNRLAGFEAAIVTDVPGTTRDLLRENITIDGLPIHLSDTAGLHNSKDTIEQEGMRRTREELIHADHVLLVADDQSGLTEAEQAILDELPDDVTYTLIFNKIDLSGAPAGRWEELQGIALRLSALTGAGMDLLCQRLKECAGFDRESEGCFSARRRHLEALQRAGAAVVVARKILGDKGAEEILAEELRQAQNALAEITGEYRSDDLLGEIFSTFCIGK</sequence>
<name>MNME_NITOC</name>